<accession>P48025</accession>
<evidence type="ECO:0000250" key="1"/>
<evidence type="ECO:0000250" key="2">
    <source>
        <dbReference type="UniProtKB" id="P43405"/>
    </source>
</evidence>
<evidence type="ECO:0000255" key="3">
    <source>
        <dbReference type="PROSITE-ProRule" id="PRU00159"/>
    </source>
</evidence>
<evidence type="ECO:0000255" key="4">
    <source>
        <dbReference type="PROSITE-ProRule" id="PRU00191"/>
    </source>
</evidence>
<evidence type="ECO:0000255" key="5">
    <source>
        <dbReference type="PROSITE-ProRule" id="PRU10028"/>
    </source>
</evidence>
<evidence type="ECO:0000256" key="6">
    <source>
        <dbReference type="SAM" id="MobiDB-lite"/>
    </source>
</evidence>
<evidence type="ECO:0000269" key="7">
    <source>
    </source>
</evidence>
<evidence type="ECO:0000269" key="8">
    <source>
    </source>
</evidence>
<evidence type="ECO:0000269" key="9">
    <source>
    </source>
</evidence>
<evidence type="ECO:0000269" key="10">
    <source>
    </source>
</evidence>
<evidence type="ECO:0000269" key="11">
    <source>
    </source>
</evidence>
<evidence type="ECO:0000269" key="12">
    <source>
    </source>
</evidence>
<evidence type="ECO:0000269" key="13">
    <source>
    </source>
</evidence>
<evidence type="ECO:0000269" key="14">
    <source>
    </source>
</evidence>
<evidence type="ECO:0000269" key="15">
    <source>
    </source>
</evidence>
<evidence type="ECO:0000269" key="16">
    <source>
    </source>
</evidence>
<evidence type="ECO:0000269" key="17">
    <source>
    </source>
</evidence>
<evidence type="ECO:0000269" key="18">
    <source>
    </source>
</evidence>
<evidence type="ECO:0000269" key="19">
    <source>
    </source>
</evidence>
<evidence type="ECO:0000269" key="20">
    <source>
    </source>
</evidence>
<evidence type="ECO:0000269" key="21">
    <source>
    </source>
</evidence>
<evidence type="ECO:0000269" key="22">
    <source>
    </source>
</evidence>
<evidence type="ECO:0000269" key="23">
    <source>
    </source>
</evidence>
<evidence type="ECO:0000269" key="24">
    <source>
    </source>
</evidence>
<evidence type="ECO:0000269" key="25">
    <source>
    </source>
</evidence>
<evidence type="ECO:0000269" key="26">
    <source>
    </source>
</evidence>
<evidence type="ECO:0000269" key="27">
    <source>
    </source>
</evidence>
<evidence type="ECO:0000305" key="28"/>
<evidence type="ECO:0000305" key="29">
    <source>
    </source>
</evidence>
<evidence type="ECO:0007744" key="30">
    <source>
    </source>
</evidence>
<evidence type="ECO:0007744" key="31">
    <source>
    </source>
</evidence>
<evidence type="ECO:0007829" key="32">
    <source>
        <dbReference type="PDB" id="2LCT"/>
    </source>
</evidence>
<reference key="1">
    <citation type="journal article" date="1995" name="Nature">
        <title>Perinatal lethality and blocked B-cell development in mice lacking the tyrosine kinase Syk.</title>
        <authorList>
            <person name="Turner M."/>
            <person name="Mee P.J."/>
            <person name="Costello P.S."/>
            <person name="Williams O."/>
            <person name="Price A.A."/>
            <person name="Duddy L.P."/>
            <person name="Furlong M.T."/>
            <person name="Geahlen R.L."/>
            <person name="Tybulewicz V.L."/>
        </authorList>
    </citation>
    <scope>NUCLEOTIDE SEQUENCE [MRNA]</scope>
    <scope>DISRUPTION PHENOTYPE</scope>
</reference>
<reference key="2">
    <citation type="journal article" date="1995" name="Biochem. Biophys. Res. Commun.">
        <title>Molecular characterization of the murine syk protein tyrosine kinase cDNA, transcripts and protein.</title>
        <authorList>
            <person name="Flueck M."/>
            <person name="Zuercher G."/>
            <person name="Andres A."/>
            <person name="Ziemiecki A."/>
        </authorList>
    </citation>
    <scope>NUCLEOTIDE SEQUENCE [MRNA]</scope>
    <source>
        <tissue>Spleen</tissue>
    </source>
</reference>
<reference key="3">
    <citation type="submission" date="1995-09" db="EMBL/GenBank/DDBJ databases">
        <authorList>
            <person name="Richards J.D."/>
            <person name="Gold M.R."/>
            <person name="Hourihane S.L."/>
            <person name="Defranco A.L."/>
            <person name="Matsuuchi L."/>
        </authorList>
    </citation>
    <scope>NUCLEOTIDE SEQUENCE [MRNA]</scope>
</reference>
<reference key="4">
    <citation type="journal article" date="1994" name="J. Exp. Med.">
        <title>Syk activation by the Src-family tyrosine kinase in the B cell receptor signaling.</title>
        <authorList>
            <person name="Kurosaki T."/>
            <person name="Takata M."/>
            <person name="Yamanashi Y."/>
            <person name="Inazu T."/>
            <person name="Taniguchi T."/>
            <person name="Yamamoto T."/>
            <person name="Yamamura H."/>
        </authorList>
    </citation>
    <scope>PHOSPHORYLATION BY LYN</scope>
</reference>
<reference key="5">
    <citation type="journal article" date="1995" name="J. Biol. Chem.">
        <title>Syk protein-tyrosine kinase is regulated by tyrosine-phosphorylated Ig alpha/Ig beta immunoreceptor tyrosine activation motif binding and autophosphorylation.</title>
        <authorList>
            <person name="Rowley R.B."/>
            <person name="Burkhardt A.L."/>
            <person name="Chao H.-G."/>
            <person name="Matsueda G.R."/>
            <person name="Bolen J.B."/>
        </authorList>
    </citation>
    <scope>INTERACTION WITH CD79A</scope>
</reference>
<reference key="6">
    <citation type="journal article" date="1995" name="Nature">
        <title>Syk tyrosine kinase required for mouse viability and B-cell development.</title>
        <authorList>
            <person name="Cheng A.M."/>
            <person name="Rowley B."/>
            <person name="Pao W."/>
            <person name="Hayday A."/>
            <person name="Bolen J.B."/>
            <person name="Pawson T."/>
        </authorList>
    </citation>
    <scope>DISRUPTION PHENOTYPE</scope>
</reference>
<reference key="7">
    <citation type="journal article" date="1997" name="EMBO J.">
        <title>The Fc receptor gamma-chain and the tyrosine kinase Syk are essential for activation of mouse platelets by collagen.</title>
        <authorList>
            <person name="Poole A."/>
            <person name="Gibbins J.M."/>
            <person name="Turner M."/>
            <person name="van Vugt M.J."/>
            <person name="van de Winkel J.G."/>
            <person name="Saito T."/>
            <person name="Tybulewicz V.L."/>
            <person name="Watson S.P."/>
        </authorList>
    </citation>
    <scope>FUNCTION IN ACTIVATION OF PLATELETS BY COLLAGEN</scope>
    <scope>FUNCTION IN PLCG2 PHOSPHORYLATION</scope>
</reference>
<reference key="8">
    <citation type="journal article" date="2001" name="Immunity">
        <title>Inhibition of beta 2 integrin receptor and Syk kinase signaling in monocytes by the Src family kinase Fgr.</title>
        <authorList>
            <person name="Vines C.M."/>
            <person name="Potter J.W."/>
            <person name="Xu Y."/>
            <person name="Geahlen R.L."/>
            <person name="Costello P.S."/>
            <person name="Tybulewicz V.L."/>
            <person name="Lowell C.A."/>
            <person name="Chang P.W."/>
            <person name="Gresham H.D."/>
            <person name="Willman C.L."/>
        </authorList>
    </citation>
    <scope>FUNCTION IN INTEGRIN SIGNALING</scope>
    <scope>PHOSPHORYLATION AT TYR-342; TYR-519 AND TYR-520</scope>
    <scope>INTERACTION WITH ITGB2 AND FGR</scope>
</reference>
<reference key="9">
    <citation type="journal article" date="2002" name="J. Biol. Chem.">
        <title>Regulation of signaling in B cells through the phosphorylation of Syk on linker region tyrosines. A mechanism for negative signaling by the Lyn tyrosine kinase.</title>
        <authorList>
            <person name="Hong J.J."/>
            <person name="Yankee T.M."/>
            <person name="Harrison M.L."/>
            <person name="Geahlen R.L."/>
        </authorList>
    </citation>
    <scope>PHOSPHORYLATION AT TYR-317; TYR-342 AND TYR-346</scope>
</reference>
<reference key="10">
    <citation type="journal article" date="2002" name="J. Cell Biol.">
        <title>Coordinate interactions of Csk, Src, and Syk kinases with [alpha]IIb[beta]3 initiate integrin signaling to the cytoskeleton.</title>
        <authorList>
            <person name="Obergfell A."/>
            <person name="Eto K."/>
            <person name="Mocsai A."/>
            <person name="Buensuceso C."/>
            <person name="Moores S.L."/>
            <person name="Brugge J.S."/>
            <person name="Lowell C.A."/>
            <person name="Shattil S.J."/>
        </authorList>
    </citation>
    <scope>FUNCTION IN INTEGRIN-MEDIATED PLATELET ADHESION</scope>
</reference>
<reference key="11">
    <citation type="journal article" date="2003" name="J. Exp. Med.">
        <title>Cbl-b negatively regulates B cell antigen receptor signaling in mature B cells through ubiquitination of the tyrosine kinase Syk.</title>
        <authorList>
            <person name="Sohn H.W."/>
            <person name="Gu H."/>
            <person name="Pierce S.K."/>
        </authorList>
    </citation>
    <scope>UBIQUITINATION BY CBLB</scope>
    <scope>ACTIVITY REGULATION</scope>
</reference>
<reference key="12">
    <citation type="journal article" date="2003" name="Science">
        <title>Regulation of blood and lymphatic vascular separation by signaling proteins SLP-76 and Syk.</title>
        <authorList>
            <person name="Abtahian F."/>
            <person name="Guerriero A."/>
            <person name="Sebzda E."/>
            <person name="Lu M.M."/>
            <person name="Zhou R."/>
            <person name="Mocsai A."/>
            <person name="Myers E.E."/>
            <person name="Huang B."/>
            <person name="Jackson D.G."/>
            <person name="Ferrari V.A."/>
            <person name="Tybulewicz V."/>
            <person name="Lowell C.A."/>
            <person name="Lepore J.J."/>
            <person name="Koretzky G.A."/>
            <person name="Kahn M.L."/>
        </authorList>
    </citation>
    <scope>FUNCTION IN VASCULAR DEVELOPMENT</scope>
</reference>
<reference key="13">
    <citation type="journal article" date="2004" name="Proc. Natl. Acad. Sci. U.S.A.">
        <title>NFAM1, an immunoreceptor tyrosine-based activation motif-bearing molecule that regulates B cell development and signaling.</title>
        <authorList>
            <person name="Ohtsuka M."/>
            <person name="Arase H."/>
            <person name="Takeuchi A."/>
            <person name="Yamasaki S."/>
            <person name="Shiina R."/>
            <person name="Suenaga T."/>
            <person name="Sakurai D."/>
            <person name="Yokosuka T."/>
            <person name="Arase N."/>
            <person name="Iwashima M."/>
            <person name="Kitamura T."/>
            <person name="Moriya H."/>
            <person name="Saito T."/>
        </authorList>
    </citation>
    <scope>INTERACTION WITH NFAM1</scope>
</reference>
<reference key="14">
    <citation type="journal article" date="2005" name="Blood">
        <title>Dectin-1 activates Syk tyrosine kinase in a dynamic subset of macrophages for reactive oxygen production.</title>
        <authorList>
            <person name="Underhill D.M."/>
            <person name="Rossnagle E."/>
            <person name="Lowell C.A."/>
            <person name="Simmons R.M."/>
        </authorList>
    </citation>
    <scope>FUNCTION IN ROS PRODUCTION</scope>
    <scope>FUNCTION IN RESPONSE TO FUNGAL PATHOGEN</scope>
</reference>
<reference key="15">
    <citation type="journal article" date="2005" name="Immunity">
        <title>Syk-dependent cytokine induction by Dectin-1 reveals a novel pattern recognition pathway for C type lectins.</title>
        <authorList>
            <person name="Rogers N.C."/>
            <person name="Slack E.C."/>
            <person name="Edwards A.D."/>
            <person name="Nolte M.A."/>
            <person name="Schulz O."/>
            <person name="Schweighoffer E."/>
            <person name="Williams D.L."/>
            <person name="Gordon S."/>
            <person name="Tybulewicz V.L."/>
            <person name="Brown G.D."/>
            <person name="Reis e Sousa C."/>
        </authorList>
    </citation>
    <scope>FUNCTION IN RESPONSE TO FUNGAL PATHOGEN</scope>
    <scope>INTERACTION WITH CLEC7A</scope>
    <scope>SUBCELLULAR LOCATION</scope>
</reference>
<reference key="16">
    <citation type="journal article" date="2006" name="Blood">
        <title>A novel Syk-dependent mechanism of platelet activation by the C-type lectin receptor CLEC-2.</title>
        <authorList>
            <person name="Suzuki-Inoue K."/>
            <person name="Fuller G.L.J."/>
            <person name="Garcia A."/>
            <person name="Eble J.A."/>
            <person name="Poehlmann S."/>
            <person name="Inoue O."/>
            <person name="Gartner T.K."/>
            <person name="Hughan S.C."/>
            <person name="Pearce A.C."/>
            <person name="Laing G.D."/>
            <person name="Theakston R.D.G."/>
            <person name="Schweighoffer E."/>
            <person name="Zitzmann N."/>
            <person name="Morita T."/>
            <person name="Tybulewicz V.L.J."/>
            <person name="Ozaki Y."/>
            <person name="Watson S.P."/>
        </authorList>
    </citation>
    <scope>FUNCTION IN ACTIVATION OF PLATELETS BY CLEC1B</scope>
</reference>
<reference key="17">
    <citation type="journal article" date="2006" name="J. Immunol.">
        <title>Scaffolding adapter Grb2-associated binder 2 requires Syk to transmit signals from FcepsilonRI.</title>
        <authorList>
            <person name="Yu M."/>
            <person name="Lowell C.A."/>
            <person name="Neel B.G."/>
            <person name="Gu H."/>
        </authorList>
    </citation>
    <scope>INTERACTION WITH GAB2</scope>
</reference>
<reference key="18">
    <citation type="journal article" date="2006" name="Nat. Immunol.">
        <title>Integrin signaling in neutrophils and macrophages uses adapters containing immunoreceptor tyrosine-based activation motifs.</title>
        <authorList>
            <person name="Mocsai A."/>
            <person name="Abram C.L."/>
            <person name="Jakus Z."/>
            <person name="Hu Y."/>
            <person name="Lanier L.L."/>
            <person name="Lowell C.A."/>
        </authorList>
    </citation>
    <scope>FUNCTION IN INTEGRIN-MEDIATED NEUTROPHIL ACTIVATION</scope>
    <scope>INTERACTION WITH FCER1G AND TYROBP</scope>
    <scope>MUTAGENESIS OF ARG-41 AND ARG-194</scope>
</reference>
<reference key="19">
    <citation type="journal article" date="2007" name="J. Cell Biol.">
        <title>Syk, c-Src, the alphavbeta3 integrin, and ITAM immunoreceptors, in concert, regulate osteoclastic bone resorption.</title>
        <authorList>
            <person name="Zou W."/>
            <person name="Kitaura H."/>
            <person name="Reeve J."/>
            <person name="Long F."/>
            <person name="Tybulewicz V.L."/>
            <person name="Shattil S.J."/>
            <person name="Ginsberg M.H."/>
            <person name="Ross F.P."/>
            <person name="Teitelbaum S.L."/>
        </authorList>
    </citation>
    <scope>FUNCTION IN OSTEOCLASTIC BONE RESORPTION</scope>
</reference>
<reference key="20">
    <citation type="journal article" date="2007" name="J. Immunol.">
        <title>Quantitative time-resolved phosphoproteomic analysis of mast cell signaling.</title>
        <authorList>
            <person name="Cao L."/>
            <person name="Yu K."/>
            <person name="Banh C."/>
            <person name="Nguyen V."/>
            <person name="Ritz A."/>
            <person name="Raphael B.J."/>
            <person name="Kawakami Y."/>
            <person name="Kawakami T."/>
            <person name="Salomon A.R."/>
        </authorList>
    </citation>
    <scope>PHOSPHORYLATION [LARGE SCALE ANALYSIS] AT SER-310; SER-313; TYR-317; TYR-342; TYR-346; TYR-519; TYR-520; TYR-540; TYR-623 AND TYR-624</scope>
    <scope>IDENTIFICATION BY MASS SPECTROMETRY [LARGE SCALE ANALYSIS]</scope>
    <source>
        <tissue>Mast cell</tissue>
    </source>
</reference>
<reference key="21">
    <citation type="journal article" date="2008" name="EMBO J.">
        <title>The kinase Syk as an adaptor controlling sustained calcium signalling and B-cell development.</title>
        <authorList>
            <person name="Kulathu Y."/>
            <person name="Hobeika E."/>
            <person name="Turchinovich G."/>
            <person name="Reth M."/>
        </authorList>
    </citation>
    <scope>INTERACTION WITH BLNK</scope>
</reference>
<reference key="22">
    <citation type="journal article" date="2009" name="Blood">
        <title>Neutrophil-specific deletion of Syk kinase results in reduced host defense to bacterial infection.</title>
        <authorList>
            <person name="Van Ziffle J.A."/>
            <person name="Lowell C.A."/>
        </authorList>
    </citation>
    <scope>FUNCTION IN RESPONSE TO BACTERIA</scope>
</reference>
<reference key="23">
    <citation type="journal article" date="2009" name="J. Immunol.">
        <title>RhoH plays critical roles in Fc epsilon RI-dependent signal transduction in mast cells.</title>
        <authorList>
            <person name="Oda H."/>
            <person name="Fujimoto M."/>
            <person name="Patrick M.S."/>
            <person name="Chida D."/>
            <person name="Sato Y."/>
            <person name="Azuma Y."/>
            <person name="Aoki H."/>
            <person name="Abe T."/>
            <person name="Suzuki H."/>
            <person name="Shirai M."/>
        </authorList>
    </citation>
    <scope>FUNCTION IN MAST CELL ACTIVATION</scope>
    <scope>INTERACTION WITH RHOH</scope>
    <scope>ACTIVITY REGULATION</scope>
</reference>
<reference key="24">
    <citation type="journal article" date="2009" name="Nature">
        <title>Syk kinase signalling couples to the Nlrp3 inflammasome for anti-fungal host defence.</title>
        <authorList>
            <person name="Gross O."/>
            <person name="Poeck H."/>
            <person name="Bscheider M."/>
            <person name="Dostert C."/>
            <person name="Hannesschlaeger N."/>
            <person name="Endres S."/>
            <person name="Hartmann G."/>
            <person name="Tardivel A."/>
            <person name="Schweighoffer E."/>
            <person name="Tybulewicz V."/>
            <person name="Mocsai A."/>
            <person name="Tschopp J."/>
            <person name="Ruland J."/>
        </authorList>
    </citation>
    <scope>FUNCTION IN RESPONSE TO FUNGAL PATHOGEN</scope>
    <scope>FUNCTION IN INFLAMMASOME ACTIVATION</scope>
    <scope>FUNCTION IN REGULATION OF TRANSCRIPTION</scope>
</reference>
<reference key="25">
    <citation type="journal article" date="2009" name="Nature">
        <title>Identification of a dendritic cell receptor that couples sensing of necrosis to immunity.</title>
        <authorList>
            <person name="Sancho D."/>
            <person name="Joffre O.P."/>
            <person name="Keller A.M."/>
            <person name="Rogers N.C."/>
            <person name="Martinez D."/>
            <person name="Hernanz-Falcon P."/>
            <person name="Rosewell I."/>
            <person name="Reis e Sousa C."/>
        </authorList>
    </citation>
    <scope>FUNCTION IN IMMUNE SYSTEM STIMULATION BY CELL NECROSIS</scope>
</reference>
<reference key="26">
    <citation type="journal article" date="2009" name="Nat. Immunol.">
        <title>Fc receptor gamma-chain, a constitutive component of the IL-3 receptor, is required for IL-3-induced IL-4 production in basophils.</title>
        <authorList>
            <person name="Hida S."/>
            <person name="Yamasaki S."/>
            <person name="Sakamoto Y."/>
            <person name="Takamoto M."/>
            <person name="Obata K."/>
            <person name="Takai T."/>
            <person name="Karasuyama H."/>
            <person name="Sugane K."/>
            <person name="Saito T."/>
            <person name="Taki S."/>
        </authorList>
    </citation>
    <scope>INTERACTION WITH FCER1G</scope>
    <scope>FUNCTION</scope>
</reference>
<reference key="27">
    <citation type="journal article" date="2010" name="Cell">
        <title>A tissue-specific atlas of mouse protein phosphorylation and expression.</title>
        <authorList>
            <person name="Huttlin E.L."/>
            <person name="Jedrychowski M.P."/>
            <person name="Elias J.E."/>
            <person name="Goswami T."/>
            <person name="Rad R."/>
            <person name="Beausoleil S.A."/>
            <person name="Villen J."/>
            <person name="Haas W."/>
            <person name="Sowa M.E."/>
            <person name="Gygi S.P."/>
        </authorList>
    </citation>
    <scope>PHOSPHORYLATION [LARGE SCALE ANALYSIS] AT SER-270</scope>
    <scope>IDENTIFICATION BY MASS SPECTROMETRY [LARGE SCALE ANALYSIS]</scope>
    <source>
        <tissue>Heart</tissue>
        <tissue>Lung</tissue>
        <tissue>Spleen</tissue>
    </source>
</reference>
<reference key="28">
    <citation type="journal article" date="2012" name="PLoS Pathog.">
        <title>CEACAM1 negatively regulates IL-1beta production in LPS activated neutrophils by recruiting SHP-1 to a SYK-TLR4-CEACAM1 complex.</title>
        <authorList>
            <person name="Lu R."/>
            <person name="Pan H."/>
            <person name="Shively J.E."/>
        </authorList>
    </citation>
    <scope>INTERACTION WITH CEACAM1</scope>
</reference>
<reference key="29">
    <citation type="journal article" date="2015" name="Proc. Natl. Acad. Sci. U.S.A.">
        <title>Protein tyrosine phosphatase SAP-1 protects against colitis through regulation of CEACAM20 in the intestinal epithelium.</title>
        <authorList>
            <person name="Murata Y."/>
            <person name="Kotani T."/>
            <person name="Supriatna Y."/>
            <person name="Kitamura Y."/>
            <person name="Imada S."/>
            <person name="Kawahara K."/>
            <person name="Nishio M."/>
            <person name="Daniwijaya E.W."/>
            <person name="Sadakata H."/>
            <person name="Kusakari S."/>
            <person name="Mori M."/>
            <person name="Kanazawa Y."/>
            <person name="Saito Y."/>
            <person name="Okawa K."/>
            <person name="Takeda-Morishita M."/>
            <person name="Okazawa H."/>
            <person name="Ohnishi H."/>
            <person name="Azuma T."/>
            <person name="Suzuki A."/>
            <person name="Matozaki T."/>
        </authorList>
    </citation>
    <scope>FUNCTION</scope>
    <scope>INTERACTION WITH CEACAM20</scope>
</reference>
<reference key="30">
    <citation type="journal article" date="2021" name="Nat. Genet.">
        <title>Gain-of-function variants in SYK cause immune dysregulation and systemic inflammation in humans and mice.</title>
        <authorList>
            <consortium name="Genomics England Research Consortium"/>
            <person name="Wang L."/>
            <person name="Aschenbrenner D."/>
            <person name="Zeng Z."/>
            <person name="Cao X."/>
            <person name="Mayr D."/>
            <person name="Mehta M."/>
            <person name="Capitani M."/>
            <person name="Warner N."/>
            <person name="Pan J."/>
            <person name="Wang L."/>
            <person name="Li Q."/>
            <person name="Zuo T."/>
            <person name="Cohen-Kedar S."/>
            <person name="Lu J."/>
            <person name="Ardy R.C."/>
            <person name="Mulder D.J."/>
            <person name="Dissanayake D."/>
            <person name="Peng K."/>
            <person name="Huang Z."/>
            <person name="Li X."/>
            <person name="Wang Y."/>
            <person name="Wang X."/>
            <person name="Li S."/>
            <person name="Bullers S."/>
            <person name="Gammage A.N."/>
            <person name="Warnatz K."/>
            <person name="Schiefer A.I."/>
            <person name="Krivan G."/>
            <person name="Goda V."/>
            <person name="Kahr W.H.A."/>
            <person name="Lemaire M."/>
            <person name="Lu C.Y."/>
            <person name="Siddiqui I."/>
            <person name="Surette M.G."/>
            <person name="Kotlarz D."/>
            <person name="Engelhardt K.R."/>
            <person name="Griffin H.R."/>
            <person name="Rottapel R."/>
            <person name="Decaluwe H."/>
            <person name="Laxer R.M."/>
            <person name="Proietti M."/>
            <person name="Hambleton S."/>
            <person name="Elcombe S."/>
            <person name="Guo C.H."/>
            <person name="Grimbacher B."/>
            <person name="Dotan I."/>
            <person name="Ng S.C."/>
            <person name="Freeman S.A."/>
            <person name="Snapper S.B."/>
            <person name="Klein C."/>
            <person name="Boztug K."/>
            <person name="Huang Y."/>
            <person name="Li D."/>
            <person name="Uhlig H.H."/>
            <person name="Muise A.M."/>
        </authorList>
    </citation>
    <scope>FUNCTION</scope>
    <scope>MUTAGENESIS OF SER-544</scope>
</reference>
<comment type="function">
    <text evidence="2 7 8 10 12 13 14 15 16 17 18 19 20 21 23 24 27">Non-receptor tyrosine kinase which mediates signal transduction downstream of a variety of transmembrane receptors including classical immunoreceptors like the B-cell receptor (BCR). Regulates several biological processes including innate and adaptive immunity, cell adhesion, osteoclast maturation, platelet activation and vascular development (PubMed:33782605). Assembles into signaling complexes with activated receptors at the plasma membrane via interaction between its SH2 domains and the receptor tyrosine-phosphorylated ITAM domains. The association with the receptor can also be indirect and mediated by adapter proteins containing ITAM or partial hemITAM domains. The phosphorylation of the ITAM domains is generally mediated by SRC subfamily kinases upon engagement of the receptor. More rarely signal transduction via SYK could be ITAM-independent. Direct downstream effectors phosphorylated by SYK include DEPTOR, VAV1, PLCG1, PI-3-kinase, LCP2 and BLNK. Initially identified as essential in B-cell receptor (BCR) signaling, it is necessary for the maturation of B-cells most probably at the pro-B to pre-B transition. Activated upon BCR engagement, it phosphorylates and activates BLNK an adapter linking the activated BCR to downstream signaling adapters and effectors. It also phosphorylates and activates PLCG1 and the PKC signaling pathway. It also phosphorylates BTK and regulates its activity in B-cell antigen receptor (BCR)-coupled signaling. In addition to its function downstream of BCR also plays a role in T-cell receptor signaling. Plays also a crucial role in the innate immune response to fungal, bacterial and viral pathogens. It is for instance activated by the membrane lectin CLEC7A. Upon stimulation by fungal proteins, CLEC7A together with SYK activates immune cells inducing the production of ROS. Also activates the inflammasome and NF-kappa-B-mediated transcription of chemokines and cytokines in presence of pathogens. Regulates neutrophil degranulation and phagocytosis through activation of the MAPK signaling cascade. Required for the stimulation of neutrophil phagocytosis by IL15 (By similarity). Also mediates the activation of dendritic cells by cell necrosis stimuli. Also involved in mast cells activation. Involved in interleukin-3/IL3-mediated signaling pathway in basophils (PubMed:19098920). Also functions downstream of receptors mediating cell adhesion. Relays for instance, integrin-mediated neutrophils and macrophages activation and P-selectin receptor/SELPG-mediated recruitment of leukocytes to inflammatory loci. Also plays a role in non-immune processes. It is for instance involved in vascular development where it may regulate blood and lymphatic vascular separation. It is also required for osteoclast development and function. Functions in the activation of platelets by collagen, mediating PLCG2 phosphorylation and activation. May be coupled to the collagen receptor by the ITAM domain-containing FCER1G. Also activated by the membrane lectin CLEC1B that is required for activation of platelets by PDPN/podoplanin. Involved in platelet adhesion being activated by ITGB3 engaged by fibrinogen. Together with CEACAM20, enhances production of the cytokine CXCL8/IL-8 via the NFKB pathway and may thus have a role in the intestinal immune response (PubMed:26195794).</text>
</comment>
<comment type="catalytic activity">
    <reaction evidence="5">
        <text>L-tyrosyl-[protein] + ATP = O-phospho-L-tyrosyl-[protein] + ADP + H(+)</text>
        <dbReference type="Rhea" id="RHEA:10596"/>
        <dbReference type="Rhea" id="RHEA-COMP:10136"/>
        <dbReference type="Rhea" id="RHEA-COMP:20101"/>
        <dbReference type="ChEBI" id="CHEBI:15378"/>
        <dbReference type="ChEBI" id="CHEBI:30616"/>
        <dbReference type="ChEBI" id="CHEBI:46858"/>
        <dbReference type="ChEBI" id="CHEBI:61978"/>
        <dbReference type="ChEBI" id="CHEBI:456216"/>
        <dbReference type="EC" id="2.7.10.2"/>
    </reaction>
</comment>
<comment type="activity regulation">
    <text evidence="1">Autoinhibited. Intramolecular binding of the interdomains A and B (also called linker region) to parts of the catalytic domain keep the catalytic center in an inactive conformation. The phosphorylation of the interdomains or the binding of the SH2 domains with dually phosphorylated ITAM domains on transmembrane proteins disrupt those intramolecular interactions allowing the kinase domain to adopt an active conformation. The phosphorylation of SYK and of the ITAM domains which is responsible for SYK activation is essentially mediated by SRC subfamily kinases, like LYN, upon transmembrane receptors engagement. May also be negatively regulated by PTPN6 through dephosphorylation (By similarity). Downstream signaling adapters and intermediates like BLNK or RHOH may mediate positive and/or negative feedback regulation. Negatively regulated by CBL and CBLB through ubiquitination and probable degradation. Phosphorylates SH3BP2 which in turn may regulate SYK through LYN (By similarity).</text>
</comment>
<comment type="subunit">
    <text evidence="2 17 22 23">Interacts with LYN; phosphorylates SYK. Interacts with RHOH (phosphorylated); regulates mast cells activation. Interacts with NFAM1 (phosphorylated); probably involved in BCR signaling. Interacts with VAV1 (via SH2 domain); phosphorylates VAV1 upon BCR activation (By similarity). Interacts with GAB2 (phosphorylated); probably involved in IgE Fc receptor signaling. Interacts (via its SH2 domains) with CD79A (via its phosphorylated ITAM domain); the interaction stimulates SYK autophosphorylation and activation. Interacts (via SH2 domains) with FCER1G (via ITAM domain); activates SYK and mediates neutrophils and macrophages integrin-mediated activation. Interaction with FCER1G in basophils triggers IL3-induced IL4 production (PubMed:19098920). Interacts with ITGB2 and FGR; involved in ITGB2 downstream signaling. Interacts with ITGB3; upon activation by ITGB3 promotes platelet adhesion (By similarity). Interacts (via SH2 domains) with TYROBP (via ITAM domain); involved in neutrophils and macrophages integrin-mediated activation. Interacts with MSN and SELPLG; mediates the selectin-dependent activation of SYK by SELPLG (By similarity). Interacts with BLNK (via SH2 domain). Interacts (via the second SH2 domain) with USP25 (via C-terminus); phosphorylates USP25 and regulates USP25 intracellular levels (By similarity). Interacts (via SH2 domains) with CLEC1B (dimer) (By similarity). Interacts with CLEC7A; participates in leukocyte activation in presence of fungal pathogens. Interacts (phosphorylated) with SLA; may regulate SYK through CBL recruitment (By similarity). Interacts with YWHAG; attenuates BCR-induced membrane translocation and activation of SYK (By similarity). Interacts (via SH2 domains) with GCSAM; the interaction increases after B-cell receptor stimulation, resulting in enhanced SYK autophosphorylation and activity (By similarity). Interacts with TNS2; leading to the phosphorylation of SYK (By similarity). Interacts with FLNA (via filamin repeat 5); docks SYK to the plasma membrane (By similarity). Interacts with CEACAM1; lipopolysaccharide activated neutrophils induce phosphorylation of SYK resulting in the formation of a complex including TLR4 and the phosphorylated form of SYK and CEACAM1, which in turn, recruits PTPN6 that dephosphorylates SYK, reducing the production of reactive oxygen species (ROS) and lysosome disruption, leading to a reduction of the inflammasome activity (PubMed:22496641). Interacts (via SH2 domains) with CEACAM20 (phosphorylated form); the interaction further enhances CEACAM20 phosphorylation (PubMed:26195794). Interacts with IL15RA (By similarity). Interacts with MPL/TPOR; this interaction negatively regulates THPO-mediated ERK1/2 signaling (By similarity).</text>
</comment>
<comment type="interaction">
    <interactant intactId="EBI-300116">
        <id>P48025</id>
    </interactant>
    <interactant intactId="EBI-943530">
        <id>Q64693</id>
        <label>Pou2af1</label>
    </interactant>
    <organismsDiffer>false</organismsDiffer>
    <experiments>2</experiments>
</comment>
<comment type="interaction">
    <interactant intactId="EBI-300116">
        <id>P48025</id>
    </interactant>
    <interactant intactId="EBI-602878">
        <id>P42227</id>
        <label>Stat3</label>
    </interactant>
    <organismsDiffer>false</organismsDiffer>
    <experiments>5</experiments>
</comment>
<comment type="interaction">
    <interactant intactId="EBI-300116">
        <id>P48025</id>
    </interactant>
    <interactant intactId="EBI-8013886">
        <id>P08487</id>
        <label>PLCG1</label>
    </interactant>
    <organismsDiffer>true</organismsDiffer>
    <experiments>4</experiments>
</comment>
<comment type="subcellular location">
    <subcellularLocation>
        <location evidence="29">Cell membrane</location>
    </subcellularLocation>
    <subcellularLocation>
        <location evidence="29">Cytoplasm</location>
        <location evidence="29">Cytosol</location>
    </subcellularLocation>
    <subcellularLocation>
        <location evidence="12">Cytoplasmic vesicle</location>
        <location evidence="12">Phagosome</location>
    </subcellularLocation>
</comment>
<comment type="domain">
    <text evidence="1">The SH2 domains mediate the interaction of SYK with the phosphorylated ITAM domains of transmembrane proteins. Some proteins like CLEC1B have a partial ITAM domain (also called hemITAM) containing a single YxxL motif. The interaction with SYK requires CLEC1B homodimerization (By similarity).</text>
</comment>
<comment type="PTM">
    <text evidence="1 2">Autophosphorylated. Phosphorylated on tyrosine residues by LYN following receptors engagement. Phosphorylation on Tyr-317 creates a binding site for CBL, an adapter protein that serves as a negative regulator of BCR-stimulated calcium ion signaling. Phosphorylation at Tyr-342 creates a binding site for VAV1 (By similarity). Phosphorylation on Tyr-342 and Tyr-346 enhances the phosphorylation and activation of phospholipase C-gamma and the early phase of calcium ion mobilization via a phosphoinositide 3-kinase-independent pathway (By similarity). Phosphorylated on tyrosine residues in response to IL15 (By similarity). Phosphorylation on Ser-291 is very common, it peaks 5 minutes after BCR stimulation, and creates a binding site for YWHAG (By similarity). Phosphorylation at Tyr-624 creates a binding site for BLNK (By similarity). Dephosphorylated by PTPN6 (By similarity).</text>
</comment>
<comment type="PTM">
    <text evidence="11">Ubiquitinated by CBLB after BCR activation; which promotes proteasomal degradation.</text>
</comment>
<comment type="disruption phenotype">
    <text evidence="25 26">Embryos display severe systemic hemorrhage and mice are not viable dying perinatally. While T-cells development is not affected, the development of B-cells is impaired most probably at the pro-B to pre-B transition and mice lack mature B-cells.</text>
</comment>
<comment type="similarity">
    <text evidence="3">Belongs to the protein kinase superfamily. Tyr protein kinase family. SYK/ZAP-70 subfamily.</text>
</comment>
<protein>
    <recommendedName>
        <fullName>Tyrosine-protein kinase SYK</fullName>
        <ecNumber>2.7.10.2</ecNumber>
    </recommendedName>
    <alternativeName>
        <fullName>Spleen tyrosine kinase</fullName>
    </alternativeName>
</protein>
<gene>
    <name type="primary">Syk</name>
    <name type="synonym">ptk72</name>
    <name type="synonym">Sykb</name>
</gene>
<proteinExistence type="evidence at protein level"/>
<sequence>MAGSAVDSANHLTYFFGNITREEAEDYLVQGGMTDGLYLLRQSRNYLGGFALSVAHNRKAHHYTIERELNGTYAISGGRAHASPADLCHYHSQEPDGLICLLKKPFNRPPGVQPKTGPFEDLKENLIREYVKQTWNLQGQALEQAIISQKPQLEKLIATTAHEKMPWFHGNISRDESEQTVLIGSKTNGKFLIRARDNSGSYALCLLHEGKVLHYRIDRDKTGKLSIPEGKKFDTLWQLVEHYSYKPDGLLRVLTVPCQKIGAQMGHPGSPNAHPVTWSPGGIISRIKSYSFPKPGHKKPAPPQGSRPESTVSFNPYEPTGGPWGPDRGLQREALPMDTEVYESPYADPEEIRPKEVYLDRSLLTLEDNELGSGNFGTVKKGYYQMKKVVKTVAVKILKNEANDPALKDELLAEANVMQQLDNPYIVRMIGICEAESWMLVMEMAELGPLNKYLQQNRHIKDKNIIELVHQVSMGMKYLEESNFVHRDLAARNVLLVTQHYAKISDFGLSKALRADENYYKAQTHGKWPVKWYAPECINYYKFSSKSDVWSFGVLMWEAFSYGQKPYRGMKGSEVTAMLEKGERMGCPAGCPREMYDLMNLCWTYDVENRPGFTAVELRLRNYYYDVVN</sequence>
<feature type="chain" id="PRO_0000088166" description="Tyrosine-protein kinase SYK">
    <location>
        <begin position="1"/>
        <end position="629"/>
    </location>
</feature>
<feature type="domain" description="SH2 1" evidence="4">
    <location>
        <begin position="14"/>
        <end position="106"/>
    </location>
</feature>
<feature type="domain" description="SH2 2" evidence="4">
    <location>
        <begin position="167"/>
        <end position="258"/>
    </location>
</feature>
<feature type="domain" description="Protein kinase" evidence="3">
    <location>
        <begin position="365"/>
        <end position="625"/>
    </location>
</feature>
<feature type="region of interest" description="Interdomain A">
    <location>
        <begin position="107"/>
        <end position="166"/>
    </location>
</feature>
<feature type="region of interest" description="Interdomain B">
    <location>
        <begin position="259"/>
        <end position="364"/>
    </location>
</feature>
<feature type="region of interest" description="Disordered" evidence="6">
    <location>
        <begin position="293"/>
        <end position="328"/>
    </location>
</feature>
<feature type="active site" description="Proton acceptor" evidence="3 5">
    <location>
        <position position="488"/>
    </location>
</feature>
<feature type="binding site" evidence="3">
    <location>
        <begin position="371"/>
        <end position="379"/>
    </location>
    <ligand>
        <name>ATP</name>
        <dbReference type="ChEBI" id="CHEBI:30616"/>
    </ligand>
</feature>
<feature type="binding site" evidence="3">
    <location>
        <position position="396"/>
    </location>
    <ligand>
        <name>ATP</name>
        <dbReference type="ChEBI" id="CHEBI:30616"/>
    </ligand>
</feature>
<feature type="modified residue" description="Phosphotyrosine" evidence="2">
    <location>
        <position position="27"/>
    </location>
</feature>
<feature type="modified residue" description="Phosphoserine" evidence="2">
    <location>
        <position position="43"/>
    </location>
</feature>
<feature type="modified residue" description="Phosphotyrosine" evidence="2">
    <location>
        <position position="46"/>
    </location>
</feature>
<feature type="modified residue" description="Phosphotyrosine" evidence="2">
    <location>
        <position position="130"/>
    </location>
</feature>
<feature type="modified residue" description="Phosphoserine" evidence="2">
    <location>
        <position position="201"/>
    </location>
</feature>
<feature type="modified residue" description="Phosphothreonine" evidence="2">
    <location>
        <position position="255"/>
    </location>
</feature>
<feature type="modified residue" description="Phosphoserine" evidence="31">
    <location>
        <position position="270"/>
    </location>
</feature>
<feature type="modified residue" description="Phosphoserine" evidence="2">
    <location>
        <position position="289"/>
    </location>
</feature>
<feature type="modified residue" description="Phosphotyrosine" evidence="2">
    <location>
        <position position="290"/>
    </location>
</feature>
<feature type="modified residue" description="Phosphoserine" evidence="2">
    <location>
        <position position="291"/>
    </location>
</feature>
<feature type="modified residue" description="Phosphoserine" evidence="30">
    <location>
        <position position="310"/>
    </location>
</feature>
<feature type="modified residue" description="Phosphothreonine" evidence="2">
    <location>
        <position position="311"/>
    </location>
</feature>
<feature type="modified residue" description="Phosphoserine" evidence="30">
    <location>
        <position position="313"/>
    </location>
</feature>
<feature type="modified residue" description="Phosphotyrosine; by LYN" evidence="9 30">
    <location>
        <position position="317"/>
    </location>
</feature>
<feature type="modified residue" description="Phosphothreonine" evidence="2">
    <location>
        <position position="339"/>
    </location>
</feature>
<feature type="modified residue" description="Phosphotyrosine" evidence="7 9 30">
    <location>
        <position position="342"/>
    </location>
</feature>
<feature type="modified residue" description="Phosphoserine" evidence="2">
    <location>
        <position position="344"/>
    </location>
</feature>
<feature type="modified residue" description="Phosphotyrosine" evidence="9 30">
    <location>
        <position position="346"/>
    </location>
</feature>
<feature type="modified residue" description="Phosphotyrosine" evidence="2">
    <location>
        <position position="358"/>
    </location>
</feature>
<feature type="modified residue" description="Phosphoserine" evidence="2">
    <location>
        <position position="373"/>
    </location>
</feature>
<feature type="modified residue" description="Phosphothreonine" evidence="2">
    <location>
        <position position="378"/>
    </location>
</feature>
<feature type="modified residue" description="Phosphotyrosine" evidence="2">
    <location>
        <position position="478"/>
    </location>
</feature>
<feature type="modified residue" description="Phosphotyrosine" evidence="2">
    <location>
        <position position="501"/>
    </location>
</feature>
<feature type="modified residue" description="Phosphotyrosine; by autocatalysis" evidence="7 30">
    <location>
        <position position="519"/>
    </location>
</feature>
<feature type="modified residue" description="Phosphotyrosine" evidence="7 30">
    <location>
        <position position="520"/>
    </location>
</feature>
<feature type="modified residue" description="Phosphothreonine" evidence="2">
    <location>
        <position position="524"/>
    </location>
</feature>
<feature type="modified residue" description="Phosphotyrosine" evidence="30">
    <location>
        <position position="540"/>
    </location>
</feature>
<feature type="modified residue" description="Phosphoserine" evidence="2">
    <location>
        <position position="573"/>
    </location>
</feature>
<feature type="modified residue" description="Phosphothreonine" evidence="2">
    <location>
        <position position="576"/>
    </location>
</feature>
<feature type="modified residue" description="Phosphotyrosine" evidence="30">
    <location>
        <position position="623"/>
    </location>
</feature>
<feature type="modified residue" description="Phosphotyrosine" evidence="30">
    <location>
        <position position="624"/>
    </location>
</feature>
<feature type="modified residue" description="Phosphotyrosine" evidence="2">
    <location>
        <position position="625"/>
    </location>
</feature>
<feature type="mutagenesis site" description="Loss of interaction with FCER1G and TYROBP; when associated with A-194." evidence="15">
    <original>R</original>
    <variation>A</variation>
    <location>
        <position position="41"/>
    </location>
</feature>
<feature type="mutagenesis site" description="Loss of interaction with FCER1G and TYROBP; when associated with A-41." evidence="15">
    <original>R</original>
    <variation>A</variation>
    <location>
        <position position="194"/>
    </location>
</feature>
<feature type="mutagenesis site" description="Constitutively active protein tyrosine kinase activity. Causes an immune dysregulation disorder. Treatment with SYK-specific inhibitor ameliorates the disease phenotype." evidence="24">
    <original>S</original>
    <variation>Y</variation>
    <location>
        <position position="544"/>
    </location>
</feature>
<feature type="sequence conflict" description="In Ref. 2; CAA90034." evidence="28" ref="2">
    <location>
        <position position="326"/>
    </location>
</feature>
<feature type="sequence conflict" description="In Ref. 2; CAA90034." evidence="28" ref="2">
    <original>EL</original>
    <variation>DV</variation>
    <location>
        <begin position="446"/>
        <end position="447"/>
    </location>
</feature>
<feature type="strand" evidence="32">
    <location>
        <begin position="346"/>
        <end position="348"/>
    </location>
</feature>
<keyword id="KW-0002">3D-structure</keyword>
<keyword id="KW-1064">Adaptive immunity</keyword>
<keyword id="KW-0037">Angiogenesis</keyword>
<keyword id="KW-0067">ATP-binding</keyword>
<keyword id="KW-1003">Cell membrane</keyword>
<keyword id="KW-0963">Cytoplasm</keyword>
<keyword id="KW-0968">Cytoplasmic vesicle</keyword>
<keyword id="KW-0391">Immunity</keyword>
<keyword id="KW-0399">Innate immunity</keyword>
<keyword id="KW-0418">Kinase</keyword>
<keyword id="KW-0472">Membrane</keyword>
<keyword id="KW-0547">Nucleotide-binding</keyword>
<keyword id="KW-0597">Phosphoprotein</keyword>
<keyword id="KW-1185">Reference proteome</keyword>
<keyword id="KW-0677">Repeat</keyword>
<keyword id="KW-0727">SH2 domain</keyword>
<keyword id="KW-0808">Transferase</keyword>
<keyword id="KW-0829">Tyrosine-protein kinase</keyword>
<keyword id="KW-0832">Ubl conjugation</keyword>
<organism>
    <name type="scientific">Mus musculus</name>
    <name type="common">Mouse</name>
    <dbReference type="NCBI Taxonomy" id="10090"/>
    <lineage>
        <taxon>Eukaryota</taxon>
        <taxon>Metazoa</taxon>
        <taxon>Chordata</taxon>
        <taxon>Craniata</taxon>
        <taxon>Vertebrata</taxon>
        <taxon>Euteleostomi</taxon>
        <taxon>Mammalia</taxon>
        <taxon>Eutheria</taxon>
        <taxon>Euarchontoglires</taxon>
        <taxon>Glires</taxon>
        <taxon>Rodentia</taxon>
        <taxon>Myomorpha</taxon>
        <taxon>Muroidea</taxon>
        <taxon>Muridae</taxon>
        <taxon>Murinae</taxon>
        <taxon>Mus</taxon>
        <taxon>Mus</taxon>
    </lineage>
</organism>
<dbReference type="EC" id="2.7.10.2"/>
<dbReference type="EMBL" id="U25685">
    <property type="protein sequence ID" value="AAA87462.1"/>
    <property type="molecule type" value="mRNA"/>
</dbReference>
<dbReference type="EMBL" id="Z49877">
    <property type="protein sequence ID" value="CAA90034.1"/>
    <property type="molecule type" value="mRNA"/>
</dbReference>
<dbReference type="EMBL" id="U36776">
    <property type="protein sequence ID" value="AAA79996.1"/>
    <property type="molecule type" value="mRNA"/>
</dbReference>
<dbReference type="CCDS" id="CCDS26517.1"/>
<dbReference type="PIR" id="I48781">
    <property type="entry name" value="I48781"/>
</dbReference>
<dbReference type="RefSeq" id="NP_001185906.1">
    <property type="nucleotide sequence ID" value="NM_001198977.1"/>
</dbReference>
<dbReference type="RefSeq" id="NP_035648.2">
    <property type="nucleotide sequence ID" value="NM_011518.2"/>
</dbReference>
<dbReference type="RefSeq" id="XP_006516958.1">
    <property type="nucleotide sequence ID" value="XM_006516895.5"/>
</dbReference>
<dbReference type="PDB" id="2LCT">
    <property type="method" value="NMR"/>
    <property type="chains" value="B=338-350"/>
</dbReference>
<dbReference type="PDB" id="2MC1">
    <property type="method" value="NMR"/>
    <property type="chains" value="B=338-350"/>
</dbReference>
<dbReference type="PDBsum" id="2LCT"/>
<dbReference type="PDBsum" id="2MC1"/>
<dbReference type="BMRB" id="P48025"/>
<dbReference type="SMR" id="P48025"/>
<dbReference type="BioGRID" id="203599">
    <property type="interactions" value="18"/>
</dbReference>
<dbReference type="CORUM" id="P48025"/>
<dbReference type="DIP" id="DIP-32621N"/>
<dbReference type="FunCoup" id="P48025">
    <property type="interactions" value="868"/>
</dbReference>
<dbReference type="IntAct" id="P48025">
    <property type="interactions" value="13"/>
</dbReference>
<dbReference type="MINT" id="P48025"/>
<dbReference type="STRING" id="10090.ENSMUSP00000113852"/>
<dbReference type="iPTMnet" id="P48025"/>
<dbReference type="PhosphoSitePlus" id="P48025"/>
<dbReference type="jPOST" id="P48025"/>
<dbReference type="PaxDb" id="10090-ENSMUSP00000113852"/>
<dbReference type="PeptideAtlas" id="P48025"/>
<dbReference type="ProteomicsDB" id="263570"/>
<dbReference type="Antibodypedia" id="733">
    <property type="antibodies" value="1565 antibodies from 50 providers"/>
</dbReference>
<dbReference type="DNASU" id="20963"/>
<dbReference type="Ensembl" id="ENSMUST00000055087.7">
    <property type="protein sequence ID" value="ENSMUSP00000060828.7"/>
    <property type="gene ID" value="ENSMUSG00000021457.15"/>
</dbReference>
<dbReference type="Ensembl" id="ENSMUST00000120135.8">
    <property type="protein sequence ID" value="ENSMUSP00000113852.2"/>
    <property type="gene ID" value="ENSMUSG00000021457.15"/>
</dbReference>
<dbReference type="GeneID" id="20963"/>
<dbReference type="KEGG" id="mmu:20963"/>
<dbReference type="UCSC" id="uc007qmz.1">
    <property type="organism name" value="mouse"/>
</dbReference>
<dbReference type="AGR" id="MGI:99515"/>
<dbReference type="CTD" id="6850"/>
<dbReference type="MGI" id="MGI:99515">
    <property type="gene designation" value="Syk"/>
</dbReference>
<dbReference type="VEuPathDB" id="HostDB:ENSMUSG00000021457"/>
<dbReference type="eggNOG" id="ENOG502QT06">
    <property type="taxonomic scope" value="Eukaryota"/>
</dbReference>
<dbReference type="GeneTree" id="ENSGT00940000159053"/>
<dbReference type="InParanoid" id="P48025"/>
<dbReference type="OMA" id="TIVGDHK"/>
<dbReference type="OrthoDB" id="535945at2759"/>
<dbReference type="PhylomeDB" id="P48025"/>
<dbReference type="TreeFam" id="TF351629"/>
<dbReference type="BRENDA" id="2.7.10.2">
    <property type="organism ID" value="3474"/>
</dbReference>
<dbReference type="Reactome" id="R-MMU-114604">
    <property type="pathway name" value="GPVI-mediated activation cascade"/>
</dbReference>
<dbReference type="Reactome" id="R-MMU-2029481">
    <property type="pathway name" value="FCGR activation"/>
</dbReference>
<dbReference type="Reactome" id="R-MMU-2029482">
    <property type="pathway name" value="Regulation of actin dynamics for phagocytic cup formation"/>
</dbReference>
<dbReference type="Reactome" id="R-MMU-2029485">
    <property type="pathway name" value="Role of phospholipids in phagocytosis"/>
</dbReference>
<dbReference type="Reactome" id="R-MMU-2424491">
    <property type="pathway name" value="DAP12 signaling"/>
</dbReference>
<dbReference type="Reactome" id="R-MMU-2454202">
    <property type="pathway name" value="Fc epsilon receptor (FCERI) signaling"/>
</dbReference>
<dbReference type="Reactome" id="R-MMU-2730905">
    <property type="pathway name" value="Role of LAT2/NTAL/LAB on calcium mobilization"/>
</dbReference>
<dbReference type="Reactome" id="R-MMU-2871796">
    <property type="pathway name" value="FCERI mediated MAPK activation"/>
</dbReference>
<dbReference type="Reactome" id="R-MMU-2871809">
    <property type="pathway name" value="FCERI mediated Ca+2 mobilization"/>
</dbReference>
<dbReference type="Reactome" id="R-MMU-354192">
    <property type="pathway name" value="Integrin signaling"/>
</dbReference>
<dbReference type="Reactome" id="R-MMU-5621480">
    <property type="pathway name" value="Dectin-2 family"/>
</dbReference>
<dbReference type="Reactome" id="R-MMU-9020558">
    <property type="pathway name" value="Interleukin-2 signaling"/>
</dbReference>
<dbReference type="Reactome" id="R-MMU-912631">
    <property type="pathway name" value="Regulation of signaling by CBL"/>
</dbReference>
<dbReference type="Reactome" id="R-MMU-9674555">
    <property type="pathway name" value="Signaling by CSF3 (G-CSF)"/>
</dbReference>
<dbReference type="Reactome" id="R-MMU-9705462">
    <property type="pathway name" value="Inactivation of CSF3 (G-CSF) signaling"/>
</dbReference>
<dbReference type="Reactome" id="R-MMU-9706374">
    <property type="pathway name" value="FLT3 signaling through SRC family kinases"/>
</dbReference>
<dbReference type="Reactome" id="R-MMU-983695">
    <property type="pathway name" value="Antigen activates B Cell Receptor (BCR) leading to generation of second messengers"/>
</dbReference>
<dbReference type="BioGRID-ORCS" id="20963">
    <property type="hits" value="8 hits in 79 CRISPR screens"/>
</dbReference>
<dbReference type="ChiTaRS" id="Syk">
    <property type="organism name" value="mouse"/>
</dbReference>
<dbReference type="EvolutionaryTrace" id="P48025"/>
<dbReference type="PRO" id="PR:P48025"/>
<dbReference type="Proteomes" id="UP000000589">
    <property type="component" value="Chromosome 13"/>
</dbReference>
<dbReference type="RNAct" id="P48025">
    <property type="molecule type" value="protein"/>
</dbReference>
<dbReference type="Bgee" id="ENSMUSG00000021457">
    <property type="expression patterns" value="Expressed in granulocyte and 172 other cell types or tissues"/>
</dbReference>
<dbReference type="ExpressionAtlas" id="P48025">
    <property type="expression patterns" value="baseline and differential"/>
</dbReference>
<dbReference type="GO" id="GO:0019815">
    <property type="term" value="C:B cell receptor complex"/>
    <property type="evidence" value="ECO:0000314"/>
    <property type="project" value="MGI"/>
</dbReference>
<dbReference type="GO" id="GO:0005737">
    <property type="term" value="C:cytoplasm"/>
    <property type="evidence" value="ECO:0000266"/>
    <property type="project" value="MGI"/>
</dbReference>
<dbReference type="GO" id="GO:0005829">
    <property type="term" value="C:cytosol"/>
    <property type="evidence" value="ECO:0000304"/>
    <property type="project" value="Reactome"/>
</dbReference>
<dbReference type="GO" id="GO:0032009">
    <property type="term" value="C:early phagosome"/>
    <property type="evidence" value="ECO:0000314"/>
    <property type="project" value="UniProtKB"/>
</dbReference>
<dbReference type="GO" id="GO:0005634">
    <property type="term" value="C:nucleus"/>
    <property type="evidence" value="ECO:0000266"/>
    <property type="project" value="MGI"/>
</dbReference>
<dbReference type="GO" id="GO:0032991">
    <property type="term" value="C:protein-containing complex"/>
    <property type="evidence" value="ECO:0000314"/>
    <property type="project" value="MGI"/>
</dbReference>
<dbReference type="GO" id="GO:0042101">
    <property type="term" value="C:T cell receptor complex"/>
    <property type="evidence" value="ECO:0000266"/>
    <property type="project" value="MGI"/>
</dbReference>
<dbReference type="GO" id="GO:0005524">
    <property type="term" value="F:ATP binding"/>
    <property type="evidence" value="ECO:0000314"/>
    <property type="project" value="MGI"/>
</dbReference>
<dbReference type="GO" id="GO:0005178">
    <property type="term" value="F:integrin binding"/>
    <property type="evidence" value="ECO:0007669"/>
    <property type="project" value="Ensembl"/>
</dbReference>
<dbReference type="GO" id="GO:0016170">
    <property type="term" value="F:interleukin-15 receptor binding"/>
    <property type="evidence" value="ECO:0007669"/>
    <property type="project" value="Ensembl"/>
</dbReference>
<dbReference type="GO" id="GO:0004715">
    <property type="term" value="F:non-membrane spanning protein tyrosine kinase activity"/>
    <property type="evidence" value="ECO:0000314"/>
    <property type="project" value="MGI"/>
</dbReference>
<dbReference type="GO" id="GO:0019902">
    <property type="term" value="F:phosphatase binding"/>
    <property type="evidence" value="ECO:0000353"/>
    <property type="project" value="UniProtKB"/>
</dbReference>
<dbReference type="GO" id="GO:0043274">
    <property type="term" value="F:phospholipase binding"/>
    <property type="evidence" value="ECO:0007669"/>
    <property type="project" value="Ensembl"/>
</dbReference>
<dbReference type="GO" id="GO:0001784">
    <property type="term" value="F:phosphotyrosine residue binding"/>
    <property type="evidence" value="ECO:0007669"/>
    <property type="project" value="Ensembl"/>
</dbReference>
<dbReference type="GO" id="GO:0019901">
    <property type="term" value="F:protein kinase binding"/>
    <property type="evidence" value="ECO:0000353"/>
    <property type="project" value="UniProtKB"/>
</dbReference>
<dbReference type="GO" id="GO:0004674">
    <property type="term" value="F:protein serine/threonine kinase activity"/>
    <property type="evidence" value="ECO:0000266"/>
    <property type="project" value="MGI"/>
</dbReference>
<dbReference type="GO" id="GO:0004713">
    <property type="term" value="F:protein tyrosine kinase activity"/>
    <property type="evidence" value="ECO:0000314"/>
    <property type="project" value="MGI"/>
</dbReference>
<dbReference type="GO" id="GO:0097110">
    <property type="term" value="F:scaffold protein binding"/>
    <property type="evidence" value="ECO:0007669"/>
    <property type="project" value="Ensembl"/>
</dbReference>
<dbReference type="GO" id="GO:0042169">
    <property type="term" value="F:SH2 domain binding"/>
    <property type="evidence" value="ECO:0000314"/>
    <property type="project" value="MGI"/>
</dbReference>
<dbReference type="GO" id="GO:0035325">
    <property type="term" value="F:Toll-like receptor binding"/>
    <property type="evidence" value="ECO:0000353"/>
    <property type="project" value="UniProtKB"/>
</dbReference>
<dbReference type="GO" id="GO:0002250">
    <property type="term" value="P:adaptive immune response"/>
    <property type="evidence" value="ECO:0000250"/>
    <property type="project" value="UniProtKB"/>
</dbReference>
<dbReference type="GO" id="GO:0097242">
    <property type="term" value="P:amyloid-beta clearance"/>
    <property type="evidence" value="ECO:0007669"/>
    <property type="project" value="Ensembl"/>
</dbReference>
<dbReference type="GO" id="GO:0001525">
    <property type="term" value="P:angiogenesis"/>
    <property type="evidence" value="ECO:0007669"/>
    <property type="project" value="UniProtKB-KW"/>
</dbReference>
<dbReference type="GO" id="GO:0097190">
    <property type="term" value="P:apoptotic signaling pathway"/>
    <property type="evidence" value="ECO:0007669"/>
    <property type="project" value="Ensembl"/>
</dbReference>
<dbReference type="GO" id="GO:0030183">
    <property type="term" value="P:B cell differentiation"/>
    <property type="evidence" value="ECO:0000315"/>
    <property type="project" value="MGI"/>
</dbReference>
<dbReference type="GO" id="GO:0050853">
    <property type="term" value="P:B cell receptor signaling pathway"/>
    <property type="evidence" value="ECO:0000314"/>
    <property type="project" value="MGI"/>
</dbReference>
<dbReference type="GO" id="GO:0043366">
    <property type="term" value="P:beta selection"/>
    <property type="evidence" value="ECO:0000316"/>
    <property type="project" value="MGI"/>
</dbReference>
<dbReference type="GO" id="GO:0048514">
    <property type="term" value="P:blood vessel morphogenesis"/>
    <property type="evidence" value="ECO:0000315"/>
    <property type="project" value="UniProtKB"/>
</dbReference>
<dbReference type="GO" id="GO:0019722">
    <property type="term" value="P:calcium-mediated signaling"/>
    <property type="evidence" value="ECO:0000315"/>
    <property type="project" value="MGI"/>
</dbReference>
<dbReference type="GO" id="GO:0001775">
    <property type="term" value="P:cell activation"/>
    <property type="evidence" value="ECO:0000315"/>
    <property type="project" value="ARUK-UCL"/>
</dbReference>
<dbReference type="GO" id="GO:0002752">
    <property type="term" value="P:cell surface pattern recognition receptor signaling pathway"/>
    <property type="evidence" value="ECO:0007669"/>
    <property type="project" value="Ensembl"/>
</dbReference>
<dbReference type="GO" id="GO:0007166">
    <property type="term" value="P:cell surface receptor signaling pathway"/>
    <property type="evidence" value="ECO:0000314"/>
    <property type="project" value="MGI"/>
</dbReference>
<dbReference type="GO" id="GO:1904646">
    <property type="term" value="P:cellular response to amyloid-beta"/>
    <property type="evidence" value="ECO:0007669"/>
    <property type="project" value="Ensembl"/>
</dbReference>
<dbReference type="GO" id="GO:1990858">
    <property type="term" value="P:cellular response to lectin"/>
    <property type="evidence" value="ECO:0000315"/>
    <property type="project" value="ARUK-UCL"/>
</dbReference>
<dbReference type="GO" id="GO:0071396">
    <property type="term" value="P:cellular response to lipid"/>
    <property type="evidence" value="ECO:0007669"/>
    <property type="project" value="Ensembl"/>
</dbReference>
<dbReference type="GO" id="GO:0071404">
    <property type="term" value="P:cellular response to low-density lipoprotein particle stimulus"/>
    <property type="evidence" value="ECO:0000314"/>
    <property type="project" value="UniProtKB"/>
</dbReference>
<dbReference type="GO" id="GO:0071226">
    <property type="term" value="P:cellular response to molecule of fungal origin"/>
    <property type="evidence" value="ECO:0000315"/>
    <property type="project" value="UniProtKB"/>
</dbReference>
<dbReference type="GO" id="GO:0038063">
    <property type="term" value="P:collagen-activated tyrosine kinase receptor signaling pathway"/>
    <property type="evidence" value="ECO:0000315"/>
    <property type="project" value="MGI"/>
</dbReference>
<dbReference type="GO" id="GO:0042742">
    <property type="term" value="P:defense response to bacterium"/>
    <property type="evidence" value="ECO:0000315"/>
    <property type="project" value="UniProtKB"/>
</dbReference>
<dbReference type="GO" id="GO:0007167">
    <property type="term" value="P:enzyme-linked receptor protein signaling pathway"/>
    <property type="evidence" value="ECO:0000314"/>
    <property type="project" value="MGI"/>
</dbReference>
<dbReference type="GO" id="GO:0051649">
    <property type="term" value="P:establishment of localization in cell"/>
    <property type="evidence" value="ECO:0000315"/>
    <property type="project" value="MGI"/>
</dbReference>
<dbReference type="GO" id="GO:0007186">
    <property type="term" value="P:G protein-coupled receptor signaling pathway"/>
    <property type="evidence" value="ECO:0000304"/>
    <property type="project" value="MGI"/>
</dbReference>
<dbReference type="GO" id="GO:0042492">
    <property type="term" value="P:gamma-delta T cell differentiation"/>
    <property type="evidence" value="ECO:0000315"/>
    <property type="project" value="MGI"/>
</dbReference>
<dbReference type="GO" id="GO:0045087">
    <property type="term" value="P:innate immune response"/>
    <property type="evidence" value="ECO:0000315"/>
    <property type="project" value="UniProtKB"/>
</dbReference>
<dbReference type="GO" id="GO:0007229">
    <property type="term" value="P:integrin-mediated signaling pathway"/>
    <property type="evidence" value="ECO:0000315"/>
    <property type="project" value="UniProtKB"/>
</dbReference>
<dbReference type="GO" id="GO:0038156">
    <property type="term" value="P:interleukin-3-mediated signaling pathway"/>
    <property type="evidence" value="ECO:0000315"/>
    <property type="project" value="UniProtKB"/>
</dbReference>
<dbReference type="GO" id="GO:0035556">
    <property type="term" value="P:intracellular signal transduction"/>
    <property type="evidence" value="ECO:0000314"/>
    <property type="project" value="MGI"/>
</dbReference>
<dbReference type="GO" id="GO:0002366">
    <property type="term" value="P:leukocyte activation involved in immune response"/>
    <property type="evidence" value="ECO:0000315"/>
    <property type="project" value="UniProtKB"/>
</dbReference>
<dbReference type="GO" id="GO:0007159">
    <property type="term" value="P:leukocyte cell-cell adhesion"/>
    <property type="evidence" value="ECO:0000250"/>
    <property type="project" value="UniProtKB"/>
</dbReference>
<dbReference type="GO" id="GO:0019370">
    <property type="term" value="P:leukotriene biosynthetic process"/>
    <property type="evidence" value="ECO:0000315"/>
    <property type="project" value="MGI"/>
</dbReference>
<dbReference type="GO" id="GO:0001945">
    <property type="term" value="P:lymph vessel development"/>
    <property type="evidence" value="ECO:0000315"/>
    <property type="project" value="UniProtKB"/>
</dbReference>
<dbReference type="GO" id="GO:0002281">
    <property type="term" value="P:macrophage activation involved in immune response"/>
    <property type="evidence" value="ECO:0000315"/>
    <property type="project" value="UniProtKB"/>
</dbReference>
<dbReference type="GO" id="GO:0043303">
    <property type="term" value="P:mast cell degranulation"/>
    <property type="evidence" value="ECO:0000315"/>
    <property type="project" value="MGI"/>
</dbReference>
<dbReference type="GO" id="GO:0002283">
    <property type="term" value="P:neutrophil activation involved in immune response"/>
    <property type="evidence" value="ECO:0000315"/>
    <property type="project" value="UniProtKB"/>
</dbReference>
<dbReference type="GO" id="GO:0030593">
    <property type="term" value="P:neutrophil chemotaxis"/>
    <property type="evidence" value="ECO:0000250"/>
    <property type="project" value="UniProtKB"/>
</dbReference>
<dbReference type="GO" id="GO:0018108">
    <property type="term" value="P:peptidyl-tyrosine phosphorylation"/>
    <property type="evidence" value="ECO:0000315"/>
    <property type="project" value="UniProtKB"/>
</dbReference>
<dbReference type="GO" id="GO:0046638">
    <property type="term" value="P:positive regulation of alpha-beta T cell differentiation"/>
    <property type="evidence" value="ECO:0000316"/>
    <property type="project" value="MGI"/>
</dbReference>
<dbReference type="GO" id="GO:0046641">
    <property type="term" value="P:positive regulation of alpha-beta T cell proliferation"/>
    <property type="evidence" value="ECO:0000316"/>
    <property type="project" value="MGI"/>
</dbReference>
<dbReference type="GO" id="GO:0045579">
    <property type="term" value="P:positive regulation of B cell differentiation"/>
    <property type="evidence" value="ECO:0000315"/>
    <property type="project" value="MGI"/>
</dbReference>
<dbReference type="GO" id="GO:0045780">
    <property type="term" value="P:positive regulation of bone resorption"/>
    <property type="evidence" value="ECO:0000315"/>
    <property type="project" value="UniProtKB"/>
</dbReference>
<dbReference type="GO" id="GO:0050850">
    <property type="term" value="P:positive regulation of calcium-mediated signaling"/>
    <property type="evidence" value="ECO:0000315"/>
    <property type="project" value="MGI"/>
</dbReference>
<dbReference type="GO" id="GO:0033630">
    <property type="term" value="P:positive regulation of cell adhesion mediated by integrin"/>
    <property type="evidence" value="ECO:0000315"/>
    <property type="project" value="UniProtKB"/>
</dbReference>
<dbReference type="GO" id="GO:0120162">
    <property type="term" value="P:positive regulation of cold-induced thermogenesis"/>
    <property type="evidence" value="ECO:0000315"/>
    <property type="project" value="YuBioLab"/>
</dbReference>
<dbReference type="GO" id="GO:0001819">
    <property type="term" value="P:positive regulation of cytokine production"/>
    <property type="evidence" value="ECO:0000316"/>
    <property type="project" value="MGI"/>
</dbReference>
<dbReference type="GO" id="GO:0045588">
    <property type="term" value="P:positive regulation of gamma-delta T cell differentiation"/>
    <property type="evidence" value="ECO:0000315"/>
    <property type="project" value="MGI"/>
</dbReference>
<dbReference type="GO" id="GO:0032725">
    <property type="term" value="P:positive regulation of granulocyte macrophage colony-stimulating factor production"/>
    <property type="evidence" value="ECO:0000315"/>
    <property type="project" value="MGI"/>
</dbReference>
<dbReference type="GO" id="GO:0032733">
    <property type="term" value="P:positive regulation of interleukin-10 production"/>
    <property type="evidence" value="ECO:0007669"/>
    <property type="project" value="Ensembl"/>
</dbReference>
<dbReference type="GO" id="GO:0032735">
    <property type="term" value="P:positive regulation of interleukin-12 production"/>
    <property type="evidence" value="ECO:0007669"/>
    <property type="project" value="Ensembl"/>
</dbReference>
<dbReference type="GO" id="GO:0032752">
    <property type="term" value="P:positive regulation of interleukin-3 production"/>
    <property type="evidence" value="ECO:0000315"/>
    <property type="project" value="MGI"/>
</dbReference>
<dbReference type="GO" id="GO:0032753">
    <property type="term" value="P:positive regulation of interleukin-4 production"/>
    <property type="evidence" value="ECO:0000315"/>
    <property type="project" value="UniProtKB"/>
</dbReference>
<dbReference type="GO" id="GO:0032755">
    <property type="term" value="P:positive regulation of interleukin-6 production"/>
    <property type="evidence" value="ECO:0007669"/>
    <property type="project" value="Ensembl"/>
</dbReference>
<dbReference type="GO" id="GO:0032757">
    <property type="term" value="P:positive regulation of interleukin-8 production"/>
    <property type="evidence" value="ECO:0007669"/>
    <property type="project" value="Ensembl"/>
</dbReference>
<dbReference type="GO" id="GO:0043410">
    <property type="term" value="P:positive regulation of MAPK cascade"/>
    <property type="evidence" value="ECO:0000314"/>
    <property type="project" value="MGI"/>
</dbReference>
<dbReference type="GO" id="GO:0032765">
    <property type="term" value="P:positive regulation of mast cell cytokine production"/>
    <property type="evidence" value="ECO:0000315"/>
    <property type="project" value="MGI"/>
</dbReference>
<dbReference type="GO" id="GO:0043306">
    <property type="term" value="P:positive regulation of mast cell degranulation"/>
    <property type="evidence" value="ECO:0000315"/>
    <property type="project" value="MGI"/>
</dbReference>
<dbReference type="GO" id="GO:0071639">
    <property type="term" value="P:positive regulation of monocyte chemotactic protein-1 production"/>
    <property type="evidence" value="ECO:0007669"/>
    <property type="project" value="Ensembl"/>
</dbReference>
<dbReference type="GO" id="GO:0031334">
    <property type="term" value="P:positive regulation of protein-containing complex assembly"/>
    <property type="evidence" value="ECO:0007669"/>
    <property type="project" value="Ensembl"/>
</dbReference>
<dbReference type="GO" id="GO:0002092">
    <property type="term" value="P:positive regulation of receptor internalization"/>
    <property type="evidence" value="ECO:0000315"/>
    <property type="project" value="CACAO"/>
</dbReference>
<dbReference type="GO" id="GO:0032930">
    <property type="term" value="P:positive regulation of superoxide anion generation"/>
    <property type="evidence" value="ECO:0007669"/>
    <property type="project" value="Ensembl"/>
</dbReference>
<dbReference type="GO" id="GO:1904263">
    <property type="term" value="P:positive regulation of TORC1 signaling"/>
    <property type="evidence" value="ECO:0007669"/>
    <property type="project" value="Ensembl"/>
</dbReference>
<dbReference type="GO" id="GO:0032760">
    <property type="term" value="P:positive regulation of tumor necrosis factor production"/>
    <property type="evidence" value="ECO:0007669"/>
    <property type="project" value="Ensembl"/>
</dbReference>
<dbReference type="GO" id="GO:0032481">
    <property type="term" value="P:positive regulation of type I interferon production"/>
    <property type="evidence" value="ECO:0000315"/>
    <property type="project" value="CACAO"/>
</dbReference>
<dbReference type="GO" id="GO:0006606">
    <property type="term" value="P:protein import into nucleus"/>
    <property type="evidence" value="ECO:0000266"/>
    <property type="project" value="MGI"/>
</dbReference>
<dbReference type="GO" id="GO:0031623">
    <property type="term" value="P:receptor internalization"/>
    <property type="evidence" value="ECO:0000314"/>
    <property type="project" value="UniProtKB"/>
</dbReference>
<dbReference type="GO" id="GO:0090237">
    <property type="term" value="P:regulation of arachidonate secretion"/>
    <property type="evidence" value="ECO:0000315"/>
    <property type="project" value="UniProtKB"/>
</dbReference>
<dbReference type="GO" id="GO:0070372">
    <property type="term" value="P:regulation of ERK1 and ERK2 cascade"/>
    <property type="evidence" value="ECO:0000315"/>
    <property type="project" value="UniProtKB"/>
</dbReference>
<dbReference type="GO" id="GO:0043313">
    <property type="term" value="P:regulation of neutrophil degranulation"/>
    <property type="evidence" value="ECO:0000315"/>
    <property type="project" value="UniProtKB"/>
</dbReference>
<dbReference type="GO" id="GO:0050764">
    <property type="term" value="P:regulation of phagocytosis"/>
    <property type="evidence" value="ECO:0000315"/>
    <property type="project" value="UniProtKB"/>
</dbReference>
<dbReference type="GO" id="GO:0010543">
    <property type="term" value="P:regulation of platelet activation"/>
    <property type="evidence" value="ECO:0000315"/>
    <property type="project" value="UniProtKB"/>
</dbReference>
<dbReference type="GO" id="GO:0090330">
    <property type="term" value="P:regulation of platelet aggregation"/>
    <property type="evidence" value="ECO:0000315"/>
    <property type="project" value="UniProtKB"/>
</dbReference>
<dbReference type="GO" id="GO:0032928">
    <property type="term" value="P:regulation of superoxide anion generation"/>
    <property type="evidence" value="ECO:0000315"/>
    <property type="project" value="UniProtKB"/>
</dbReference>
<dbReference type="GO" id="GO:0010803">
    <property type="term" value="P:regulation of tumor necrosis factor-mediated signaling pathway"/>
    <property type="evidence" value="ECO:0007669"/>
    <property type="project" value="Ensembl"/>
</dbReference>
<dbReference type="GO" id="GO:0001820">
    <property type="term" value="P:serotonin secretion"/>
    <property type="evidence" value="ECO:0000315"/>
    <property type="project" value="MGI"/>
</dbReference>
<dbReference type="GO" id="GO:0002554">
    <property type="term" value="P:serotonin secretion by platelet"/>
    <property type="evidence" value="ECO:0000315"/>
    <property type="project" value="UniProtKB"/>
</dbReference>
<dbReference type="GO" id="GO:0002223">
    <property type="term" value="P:stimulatory C-type lectin receptor signaling pathway"/>
    <property type="evidence" value="ECO:0000315"/>
    <property type="project" value="ARUK-UCL"/>
</dbReference>
<dbReference type="CDD" id="cd05116">
    <property type="entry name" value="PTKc_Syk"/>
    <property type="match status" value="1"/>
</dbReference>
<dbReference type="CDD" id="cd10401">
    <property type="entry name" value="SH2_C-SH2_Syk_like"/>
    <property type="match status" value="1"/>
</dbReference>
<dbReference type="CDD" id="cd09938">
    <property type="entry name" value="SH2_N-SH2_Zap70_Syk_like"/>
    <property type="match status" value="1"/>
</dbReference>
<dbReference type="FunFam" id="1.10.930.10:FF:000001">
    <property type="entry name" value="Tyrosine-protein kinase"/>
    <property type="match status" value="1"/>
</dbReference>
<dbReference type="FunFam" id="3.30.200.20:FF:000185">
    <property type="entry name" value="Tyrosine-protein kinase"/>
    <property type="match status" value="1"/>
</dbReference>
<dbReference type="FunFam" id="3.30.505.10:FF:000031">
    <property type="entry name" value="Tyrosine-protein kinase"/>
    <property type="match status" value="1"/>
</dbReference>
<dbReference type="FunFam" id="3.30.505.10:FF:000038">
    <property type="entry name" value="Tyrosine-protein kinase"/>
    <property type="match status" value="1"/>
</dbReference>
<dbReference type="FunFam" id="1.10.510.10:FF:000216">
    <property type="entry name" value="Tyrosine-protein kinase SYK"/>
    <property type="match status" value="1"/>
</dbReference>
<dbReference type="Gene3D" id="3.30.200.20">
    <property type="entry name" value="Phosphorylase Kinase, domain 1"/>
    <property type="match status" value="1"/>
</dbReference>
<dbReference type="Gene3D" id="3.30.505.10">
    <property type="entry name" value="SH2 domain"/>
    <property type="match status" value="2"/>
</dbReference>
<dbReference type="Gene3D" id="1.10.930.10">
    <property type="entry name" value="Syk Kinase, Chain A, domain 2"/>
    <property type="match status" value="1"/>
</dbReference>
<dbReference type="Gene3D" id="1.10.510.10">
    <property type="entry name" value="Transferase(Phosphotransferase) domain 1"/>
    <property type="match status" value="1"/>
</dbReference>
<dbReference type="IDEAL" id="IID50282"/>
<dbReference type="InterPro" id="IPR011009">
    <property type="entry name" value="Kinase-like_dom_sf"/>
</dbReference>
<dbReference type="InterPro" id="IPR023420">
    <property type="entry name" value="Kinase_SYK/ZAP-70_inter-SH2_sf"/>
</dbReference>
<dbReference type="InterPro" id="IPR050198">
    <property type="entry name" value="Non-receptor_tyrosine_kinases"/>
</dbReference>
<dbReference type="InterPro" id="IPR000719">
    <property type="entry name" value="Prot_kinase_dom"/>
</dbReference>
<dbReference type="InterPro" id="IPR017441">
    <property type="entry name" value="Protein_kinase_ATP_BS"/>
</dbReference>
<dbReference type="InterPro" id="IPR001245">
    <property type="entry name" value="Ser-Thr/Tyr_kinase_cat_dom"/>
</dbReference>
<dbReference type="InterPro" id="IPR000980">
    <property type="entry name" value="SH2"/>
</dbReference>
<dbReference type="InterPro" id="IPR036860">
    <property type="entry name" value="SH2_dom_sf"/>
</dbReference>
<dbReference type="InterPro" id="IPR035838">
    <property type="entry name" value="SYK/ZAP-70_N_SH2"/>
</dbReference>
<dbReference type="InterPro" id="IPR008266">
    <property type="entry name" value="Tyr_kinase_AS"/>
</dbReference>
<dbReference type="InterPro" id="IPR020635">
    <property type="entry name" value="Tyr_kinase_cat_dom"/>
</dbReference>
<dbReference type="InterPro" id="IPR012234">
    <property type="entry name" value="Tyr_kinase_non-rcpt_SYK/ZAP70"/>
</dbReference>
<dbReference type="PANTHER" id="PTHR24418">
    <property type="entry name" value="TYROSINE-PROTEIN KINASE"/>
    <property type="match status" value="1"/>
</dbReference>
<dbReference type="Pfam" id="PF07714">
    <property type="entry name" value="PK_Tyr_Ser-Thr"/>
    <property type="match status" value="1"/>
</dbReference>
<dbReference type="Pfam" id="PF00017">
    <property type="entry name" value="SH2"/>
    <property type="match status" value="2"/>
</dbReference>
<dbReference type="PIRSF" id="PIRSF000604">
    <property type="entry name" value="TyrPK_SYK"/>
    <property type="match status" value="1"/>
</dbReference>
<dbReference type="PRINTS" id="PR00401">
    <property type="entry name" value="SH2DOMAIN"/>
</dbReference>
<dbReference type="PRINTS" id="PR00109">
    <property type="entry name" value="TYRKINASE"/>
</dbReference>
<dbReference type="SMART" id="SM00252">
    <property type="entry name" value="SH2"/>
    <property type="match status" value="2"/>
</dbReference>
<dbReference type="SMART" id="SM00219">
    <property type="entry name" value="TyrKc"/>
    <property type="match status" value="1"/>
</dbReference>
<dbReference type="SUPFAM" id="SSF56112">
    <property type="entry name" value="Protein kinase-like (PK-like)"/>
    <property type="match status" value="1"/>
</dbReference>
<dbReference type="SUPFAM" id="SSF55550">
    <property type="entry name" value="SH2 domain"/>
    <property type="match status" value="2"/>
</dbReference>
<dbReference type="PROSITE" id="PS00107">
    <property type="entry name" value="PROTEIN_KINASE_ATP"/>
    <property type="match status" value="1"/>
</dbReference>
<dbReference type="PROSITE" id="PS50011">
    <property type="entry name" value="PROTEIN_KINASE_DOM"/>
    <property type="match status" value="1"/>
</dbReference>
<dbReference type="PROSITE" id="PS00109">
    <property type="entry name" value="PROTEIN_KINASE_TYR"/>
    <property type="match status" value="1"/>
</dbReference>
<dbReference type="PROSITE" id="PS50001">
    <property type="entry name" value="SH2"/>
    <property type="match status" value="2"/>
</dbReference>
<name>KSYK_MOUSE</name>